<evidence type="ECO:0000255" key="1">
    <source>
        <dbReference type="HAMAP-Rule" id="MF_01520"/>
    </source>
</evidence>
<organism>
    <name type="scientific">Sinorhizobium medicae (strain WSM419)</name>
    <name type="common">Ensifer medicae</name>
    <dbReference type="NCBI Taxonomy" id="366394"/>
    <lineage>
        <taxon>Bacteria</taxon>
        <taxon>Pseudomonadati</taxon>
        <taxon>Pseudomonadota</taxon>
        <taxon>Alphaproteobacteria</taxon>
        <taxon>Hyphomicrobiales</taxon>
        <taxon>Rhizobiaceae</taxon>
        <taxon>Sinorhizobium/Ensifer group</taxon>
        <taxon>Sinorhizobium</taxon>
    </lineage>
</organism>
<gene>
    <name evidence="1" type="primary">ispDF</name>
    <name type="ordered locus">Smed_1087</name>
</gene>
<keyword id="KW-0414">Isoprene biosynthesis</keyword>
<keyword id="KW-0456">Lyase</keyword>
<keyword id="KW-0479">Metal-binding</keyword>
<keyword id="KW-0511">Multifunctional enzyme</keyword>
<keyword id="KW-0548">Nucleotidyltransferase</keyword>
<keyword id="KW-0808">Transferase</keyword>
<dbReference type="EC" id="2.7.7.60" evidence="1"/>
<dbReference type="EC" id="4.6.1.12" evidence="1"/>
<dbReference type="EMBL" id="CP000738">
    <property type="protein sequence ID" value="ABR59938.1"/>
    <property type="molecule type" value="Genomic_DNA"/>
</dbReference>
<dbReference type="RefSeq" id="WP_011975262.1">
    <property type="nucleotide sequence ID" value="NC_009636.1"/>
</dbReference>
<dbReference type="RefSeq" id="YP_001326773.1">
    <property type="nucleotide sequence ID" value="NC_009636.1"/>
</dbReference>
<dbReference type="SMR" id="A6U8F8"/>
<dbReference type="STRING" id="366394.Smed_1087"/>
<dbReference type="KEGG" id="smd:Smed_1087"/>
<dbReference type="PATRIC" id="fig|366394.8.peg.4211"/>
<dbReference type="eggNOG" id="COG0245">
    <property type="taxonomic scope" value="Bacteria"/>
</dbReference>
<dbReference type="eggNOG" id="COG1211">
    <property type="taxonomic scope" value="Bacteria"/>
</dbReference>
<dbReference type="HOGENOM" id="CLU_042800_1_0_5"/>
<dbReference type="OrthoDB" id="9804336at2"/>
<dbReference type="UniPathway" id="UPA00056">
    <property type="reaction ID" value="UER00093"/>
</dbReference>
<dbReference type="UniPathway" id="UPA00056">
    <property type="reaction ID" value="UER00095"/>
</dbReference>
<dbReference type="Proteomes" id="UP000001108">
    <property type="component" value="Chromosome"/>
</dbReference>
<dbReference type="GO" id="GO:0008685">
    <property type="term" value="F:2-C-methyl-D-erythritol 2,4-cyclodiphosphate synthase activity"/>
    <property type="evidence" value="ECO:0007669"/>
    <property type="project" value="UniProtKB-UniRule"/>
</dbReference>
<dbReference type="GO" id="GO:0050518">
    <property type="term" value="F:2-C-methyl-D-erythritol 4-phosphate cytidylyltransferase activity"/>
    <property type="evidence" value="ECO:0007669"/>
    <property type="project" value="UniProtKB-UniRule"/>
</dbReference>
<dbReference type="GO" id="GO:0046872">
    <property type="term" value="F:metal ion binding"/>
    <property type="evidence" value="ECO:0007669"/>
    <property type="project" value="UniProtKB-KW"/>
</dbReference>
<dbReference type="GO" id="GO:0019288">
    <property type="term" value="P:isopentenyl diphosphate biosynthetic process, methylerythritol 4-phosphate pathway"/>
    <property type="evidence" value="ECO:0007669"/>
    <property type="project" value="UniProtKB-UniRule"/>
</dbReference>
<dbReference type="GO" id="GO:0016114">
    <property type="term" value="P:terpenoid biosynthetic process"/>
    <property type="evidence" value="ECO:0007669"/>
    <property type="project" value="InterPro"/>
</dbReference>
<dbReference type="CDD" id="cd02516">
    <property type="entry name" value="CDP-ME_synthetase"/>
    <property type="match status" value="1"/>
</dbReference>
<dbReference type="CDD" id="cd00554">
    <property type="entry name" value="MECDP_synthase"/>
    <property type="match status" value="1"/>
</dbReference>
<dbReference type="FunFam" id="3.90.550.10:FF:000003">
    <property type="entry name" value="2-C-methyl-D-erythritol 4-phosphate cytidylyltransferase"/>
    <property type="match status" value="1"/>
</dbReference>
<dbReference type="Gene3D" id="3.30.1330.50">
    <property type="entry name" value="2-C-methyl-D-erythritol 2,4-cyclodiphosphate synthase"/>
    <property type="match status" value="1"/>
</dbReference>
<dbReference type="Gene3D" id="3.90.550.10">
    <property type="entry name" value="Spore Coat Polysaccharide Biosynthesis Protein SpsA, Chain A"/>
    <property type="match status" value="1"/>
</dbReference>
<dbReference type="HAMAP" id="MF_00108">
    <property type="entry name" value="IspD"/>
    <property type="match status" value="1"/>
</dbReference>
<dbReference type="HAMAP" id="MF_01520">
    <property type="entry name" value="IspDF"/>
    <property type="match status" value="1"/>
</dbReference>
<dbReference type="HAMAP" id="MF_00107">
    <property type="entry name" value="IspF"/>
    <property type="match status" value="1"/>
</dbReference>
<dbReference type="InterPro" id="IPR001228">
    <property type="entry name" value="IspD"/>
</dbReference>
<dbReference type="InterPro" id="IPR026596">
    <property type="entry name" value="IspD/F"/>
</dbReference>
<dbReference type="InterPro" id="IPR034683">
    <property type="entry name" value="IspD/TarI"/>
</dbReference>
<dbReference type="InterPro" id="IPR018294">
    <property type="entry name" value="ISPD_synthase_CS"/>
</dbReference>
<dbReference type="InterPro" id="IPR003526">
    <property type="entry name" value="MECDP_synthase"/>
</dbReference>
<dbReference type="InterPro" id="IPR020555">
    <property type="entry name" value="MECDP_synthase_CS"/>
</dbReference>
<dbReference type="InterPro" id="IPR036571">
    <property type="entry name" value="MECDP_synthase_sf"/>
</dbReference>
<dbReference type="InterPro" id="IPR029044">
    <property type="entry name" value="Nucleotide-diphossugar_trans"/>
</dbReference>
<dbReference type="NCBIfam" id="TIGR00453">
    <property type="entry name" value="ispD"/>
    <property type="match status" value="1"/>
</dbReference>
<dbReference type="NCBIfam" id="TIGR00151">
    <property type="entry name" value="ispF"/>
    <property type="match status" value="1"/>
</dbReference>
<dbReference type="NCBIfam" id="NF006899">
    <property type="entry name" value="PRK09382.1"/>
    <property type="match status" value="1"/>
</dbReference>
<dbReference type="PANTHER" id="PTHR43181">
    <property type="entry name" value="2-C-METHYL-D-ERYTHRITOL 2,4-CYCLODIPHOSPHATE SYNTHASE, CHLOROPLASTIC"/>
    <property type="match status" value="1"/>
</dbReference>
<dbReference type="PANTHER" id="PTHR43181:SF1">
    <property type="entry name" value="2-C-METHYL-D-ERYTHRITOL 2,4-CYCLODIPHOSPHATE SYNTHASE, CHLOROPLASTIC"/>
    <property type="match status" value="1"/>
</dbReference>
<dbReference type="Pfam" id="PF01128">
    <property type="entry name" value="IspD"/>
    <property type="match status" value="1"/>
</dbReference>
<dbReference type="Pfam" id="PF02542">
    <property type="entry name" value="YgbB"/>
    <property type="match status" value="1"/>
</dbReference>
<dbReference type="SUPFAM" id="SSF69765">
    <property type="entry name" value="IpsF-like"/>
    <property type="match status" value="1"/>
</dbReference>
<dbReference type="SUPFAM" id="SSF53448">
    <property type="entry name" value="Nucleotide-diphospho-sugar transferases"/>
    <property type="match status" value="1"/>
</dbReference>
<dbReference type="PROSITE" id="PS01295">
    <property type="entry name" value="ISPD"/>
    <property type="match status" value="1"/>
</dbReference>
<dbReference type="PROSITE" id="PS01350">
    <property type="entry name" value="ISPF"/>
    <property type="match status" value="1"/>
</dbReference>
<sequence>MQAEEQFSCGVIVVAAGRGERAGQSSEGPKQYRTVGDRPVITHTLDVFATWDGTGPVVVVIHPEDEELFASARKRMGHMLDLTVVHGGATRQLSVLAGLQAIAGAGVKHVMIHDAVRPFFDHALLDRCRAALRNGAGAVLPAVAVADTLKRAQAGGLVAETVPRTDLHAAQTPQCFRLEAILSAHRQAAASGQADFTDDASIAEWAGIPVHLVEGSPDNFKLTLRRDLSMADEKLTRMAIPDVRTGNGYDVHQLVEGDGVTLCGVFIPHDRKLSGHSDADVALHALTDALLATCGAGDIGDHFPPSDPRWKGAPSHIFLEHAARIVRERGGTITHADISLIAEAPKVGPHRQQMRESLSAMLAIAIDRCSVKATTNEKLGFVGRNEGIAAIATATVVYASGGDA</sequence>
<reference key="1">
    <citation type="submission" date="2007-06" db="EMBL/GenBank/DDBJ databases">
        <title>Complete sequence of Sinorhizobium medicae WSM419 chromosome.</title>
        <authorList>
            <consortium name="US DOE Joint Genome Institute"/>
            <person name="Copeland A."/>
            <person name="Lucas S."/>
            <person name="Lapidus A."/>
            <person name="Barry K."/>
            <person name="Glavina del Rio T."/>
            <person name="Dalin E."/>
            <person name="Tice H."/>
            <person name="Pitluck S."/>
            <person name="Chain P."/>
            <person name="Malfatti S."/>
            <person name="Shin M."/>
            <person name="Vergez L."/>
            <person name="Schmutz J."/>
            <person name="Larimer F."/>
            <person name="Land M."/>
            <person name="Hauser L."/>
            <person name="Kyrpides N."/>
            <person name="Mikhailova N."/>
            <person name="Reeve W.G."/>
            <person name="Richardson P."/>
        </authorList>
    </citation>
    <scope>NUCLEOTIDE SEQUENCE [LARGE SCALE GENOMIC DNA]</scope>
    <source>
        <strain>WSM419</strain>
    </source>
</reference>
<name>ISPDF_SINMW</name>
<accession>A6U8F8</accession>
<protein>
    <recommendedName>
        <fullName evidence="1">Bifunctional enzyme IspD/IspF</fullName>
    </recommendedName>
    <domain>
        <recommendedName>
            <fullName evidence="1">2-C-methyl-D-erythritol 4-phosphate cytidylyltransferase</fullName>
            <ecNumber evidence="1">2.7.7.60</ecNumber>
        </recommendedName>
        <alternativeName>
            <fullName evidence="1">4-diphosphocytidyl-2C-methyl-D-erythritol synthase</fullName>
        </alternativeName>
        <alternativeName>
            <fullName evidence="1">MEP cytidylyltransferase</fullName>
            <shortName evidence="1">MCT</shortName>
        </alternativeName>
    </domain>
    <domain>
        <recommendedName>
            <fullName evidence="1">2-C-methyl-D-erythritol 2,4-cyclodiphosphate synthase</fullName>
            <shortName evidence="1">MECDP-synthase</shortName>
            <shortName evidence="1">MECPP-synthase</shortName>
            <shortName evidence="1">MECPS</shortName>
            <ecNumber evidence="1">4.6.1.12</ecNumber>
        </recommendedName>
    </domain>
</protein>
<feature type="chain" id="PRO_1000068627" description="Bifunctional enzyme IspD/IspF">
    <location>
        <begin position="1"/>
        <end position="404"/>
    </location>
</feature>
<feature type="region of interest" description="2-C-methyl-D-erythritol 4-phosphate cytidylyltransferase" evidence="1">
    <location>
        <begin position="1"/>
        <end position="243"/>
    </location>
</feature>
<feature type="region of interest" description="2-C-methyl-D-erythritol 2,4-cyclodiphosphate synthase" evidence="1">
    <location>
        <begin position="244"/>
        <end position="404"/>
    </location>
</feature>
<feature type="binding site" evidence="1">
    <location>
        <begin position="250"/>
        <end position="252"/>
    </location>
    <ligand>
        <name>4-CDP-2-C-methyl-D-erythritol 2-phosphate</name>
        <dbReference type="ChEBI" id="CHEBI:57919"/>
    </ligand>
</feature>
<feature type="binding site" evidence="1">
    <location>
        <position position="250"/>
    </location>
    <ligand>
        <name>a divalent metal cation</name>
        <dbReference type="ChEBI" id="CHEBI:60240"/>
    </ligand>
</feature>
<feature type="binding site" evidence="1">
    <location>
        <position position="252"/>
    </location>
    <ligand>
        <name>a divalent metal cation</name>
        <dbReference type="ChEBI" id="CHEBI:60240"/>
    </ligand>
</feature>
<feature type="binding site" evidence="1">
    <location>
        <begin position="276"/>
        <end position="277"/>
    </location>
    <ligand>
        <name>4-CDP-2-C-methyl-D-erythritol 2-phosphate</name>
        <dbReference type="ChEBI" id="CHEBI:57919"/>
    </ligand>
</feature>
<feature type="binding site" evidence="1">
    <location>
        <position position="284"/>
    </location>
    <ligand>
        <name>a divalent metal cation</name>
        <dbReference type="ChEBI" id="CHEBI:60240"/>
    </ligand>
</feature>
<feature type="binding site" evidence="1">
    <location>
        <begin position="298"/>
        <end position="300"/>
    </location>
    <ligand>
        <name>4-CDP-2-C-methyl-D-erythritol 2-phosphate</name>
        <dbReference type="ChEBI" id="CHEBI:57919"/>
    </ligand>
</feature>
<feature type="binding site" evidence="1">
    <location>
        <begin position="374"/>
        <end position="377"/>
    </location>
    <ligand>
        <name>4-CDP-2-C-methyl-D-erythritol 2-phosphate</name>
        <dbReference type="ChEBI" id="CHEBI:57919"/>
    </ligand>
</feature>
<feature type="binding site" evidence="1">
    <location>
        <position position="381"/>
    </location>
    <ligand>
        <name>4-CDP-2-C-methyl-D-erythritol 2-phosphate</name>
        <dbReference type="ChEBI" id="CHEBI:57919"/>
    </ligand>
</feature>
<feature type="binding site" evidence="1">
    <location>
        <position position="384"/>
    </location>
    <ligand>
        <name>4-CDP-2-C-methyl-D-erythritol 2-phosphate</name>
        <dbReference type="ChEBI" id="CHEBI:57919"/>
    </ligand>
</feature>
<feature type="site" description="Transition state stabilizer" evidence="1">
    <location>
        <position position="21"/>
    </location>
</feature>
<feature type="site" description="Transition state stabilizer" evidence="1">
    <location>
        <position position="30"/>
    </location>
</feature>
<feature type="site" description="Positions MEP for the nucleophilic attack" evidence="1">
    <location>
        <position position="164"/>
    </location>
</feature>
<feature type="site" description="Positions MEP for the nucleophilic attack" evidence="1">
    <location>
        <position position="221"/>
    </location>
</feature>
<feature type="site" description="Transition state stabilizer" evidence="1">
    <location>
        <position position="276"/>
    </location>
</feature>
<feature type="site" description="Transition state stabilizer" evidence="1">
    <location>
        <position position="375"/>
    </location>
</feature>
<proteinExistence type="inferred from homology"/>
<comment type="function">
    <text evidence="1">Bifunctional enzyme that catalyzes the formation of 4-diphosphocytidyl-2-C-methyl-D-erythritol from CTP and 2-C-methyl-D-erythritol 4-phosphate (MEP) (IspD), and catalyzes the conversion of 4-diphosphocytidyl-2-C-methyl-D-erythritol 2-phosphate (CDP-ME2P) to 2-C-methyl-D-erythritol 2,4-cyclodiphosphate (ME-CPP) with a corresponding release of cytidine 5-monophosphate (CMP) (IspF).</text>
</comment>
<comment type="catalytic activity">
    <reaction evidence="1">
        <text>2-C-methyl-D-erythritol 4-phosphate + CTP + H(+) = 4-CDP-2-C-methyl-D-erythritol + diphosphate</text>
        <dbReference type="Rhea" id="RHEA:13429"/>
        <dbReference type="ChEBI" id="CHEBI:15378"/>
        <dbReference type="ChEBI" id="CHEBI:33019"/>
        <dbReference type="ChEBI" id="CHEBI:37563"/>
        <dbReference type="ChEBI" id="CHEBI:57823"/>
        <dbReference type="ChEBI" id="CHEBI:58262"/>
        <dbReference type="EC" id="2.7.7.60"/>
    </reaction>
</comment>
<comment type="catalytic activity">
    <reaction evidence="1">
        <text>4-CDP-2-C-methyl-D-erythritol 2-phosphate = 2-C-methyl-D-erythritol 2,4-cyclic diphosphate + CMP</text>
        <dbReference type="Rhea" id="RHEA:23864"/>
        <dbReference type="ChEBI" id="CHEBI:57919"/>
        <dbReference type="ChEBI" id="CHEBI:58483"/>
        <dbReference type="ChEBI" id="CHEBI:60377"/>
        <dbReference type="EC" id="4.6.1.12"/>
    </reaction>
</comment>
<comment type="cofactor">
    <cofactor evidence="1">
        <name>a divalent metal cation</name>
        <dbReference type="ChEBI" id="CHEBI:60240"/>
    </cofactor>
</comment>
<comment type="pathway">
    <text evidence="1">Isoprenoid biosynthesis; isopentenyl diphosphate biosynthesis via DXP pathway; isopentenyl diphosphate from 1-deoxy-D-xylulose 5-phosphate: step 2/6.</text>
</comment>
<comment type="pathway">
    <text evidence="1">Isoprenoid biosynthesis; isopentenyl diphosphate biosynthesis via DXP pathway; isopentenyl diphosphate from 1-deoxy-D-xylulose 5-phosphate: step 4/6.</text>
</comment>
<comment type="similarity">
    <text evidence="1">In the N-terminal section; belongs to the IspD/TarI cytidylyltransferase family. IspD subfamily.</text>
</comment>
<comment type="similarity">
    <text evidence="1">In the C-terminal section; belongs to the IspF family.</text>
</comment>